<name>YP216_YEAST</name>
<evidence type="ECO:0000250" key="1"/>
<evidence type="ECO:0000255" key="2"/>
<evidence type="ECO:0000255" key="3">
    <source>
        <dbReference type="PROSITE-ProRule" id="PRU00063"/>
    </source>
</evidence>
<evidence type="ECO:0000255" key="4">
    <source>
        <dbReference type="PROSITE-ProRule" id="PRU00475"/>
    </source>
</evidence>
<evidence type="ECO:0000256" key="5">
    <source>
        <dbReference type="SAM" id="MobiDB-lite"/>
    </source>
</evidence>
<evidence type="ECO:0000269" key="6">
    <source>
    </source>
</evidence>
<gene>
    <name type="ordered locus">YPL216W</name>
</gene>
<comment type="function">
    <text evidence="1">May be required for the activity of an ISWI chromatin-remodeling complex.</text>
</comment>
<comment type="subcellular location">
    <subcellularLocation>
        <location evidence="3 4">Nucleus</location>
    </subcellularLocation>
</comment>
<comment type="miscellaneous">
    <text evidence="6">Present with 3060 molecules/cell in log phase SD medium.</text>
</comment>
<feature type="chain" id="PRO_0000242161" description="Putative ISWI chromatin-remodeling complex subunit YPL216W">
    <location>
        <begin position="1"/>
        <end position="1102"/>
    </location>
</feature>
<feature type="domain" description="WAC" evidence="4">
    <location>
        <begin position="23"/>
        <end position="131"/>
    </location>
</feature>
<feature type="domain" description="DDT" evidence="3">
    <location>
        <begin position="375"/>
        <end position="435"/>
    </location>
</feature>
<feature type="region of interest" description="Disordered" evidence="5">
    <location>
        <begin position="271"/>
        <end position="301"/>
    </location>
</feature>
<feature type="coiled-coil region" evidence="2">
    <location>
        <begin position="673"/>
        <end position="743"/>
    </location>
</feature>
<protein>
    <recommendedName>
        <fullName>Putative ISWI chromatin-remodeling complex subunit YPL216W</fullName>
    </recommendedName>
</protein>
<organism>
    <name type="scientific">Saccharomyces cerevisiae (strain ATCC 204508 / S288c)</name>
    <name type="common">Baker's yeast</name>
    <dbReference type="NCBI Taxonomy" id="559292"/>
    <lineage>
        <taxon>Eukaryota</taxon>
        <taxon>Fungi</taxon>
        <taxon>Dikarya</taxon>
        <taxon>Ascomycota</taxon>
        <taxon>Saccharomycotina</taxon>
        <taxon>Saccharomycetes</taxon>
        <taxon>Saccharomycetales</taxon>
        <taxon>Saccharomycetaceae</taxon>
        <taxon>Saccharomyces</taxon>
    </lineage>
</organism>
<keyword id="KW-0156">Chromatin regulator</keyword>
<keyword id="KW-0175">Coiled coil</keyword>
<keyword id="KW-0539">Nucleus</keyword>
<keyword id="KW-1185">Reference proteome</keyword>
<keyword id="KW-0678">Repressor</keyword>
<keyword id="KW-0804">Transcription</keyword>
<keyword id="KW-0805">Transcription regulation</keyword>
<reference key="1">
    <citation type="journal article" date="1997" name="Nature">
        <title>The nucleotide sequence of Saccharomyces cerevisiae chromosome XVI.</title>
        <authorList>
            <person name="Bussey H."/>
            <person name="Storms R.K."/>
            <person name="Ahmed A."/>
            <person name="Albermann K."/>
            <person name="Allen E."/>
            <person name="Ansorge W."/>
            <person name="Araujo R."/>
            <person name="Aparicio A."/>
            <person name="Barrell B.G."/>
            <person name="Badcock K."/>
            <person name="Benes V."/>
            <person name="Botstein D."/>
            <person name="Bowman S."/>
            <person name="Brueckner M."/>
            <person name="Carpenter J."/>
            <person name="Cherry J.M."/>
            <person name="Chung E."/>
            <person name="Churcher C.M."/>
            <person name="Coster F."/>
            <person name="Davis K."/>
            <person name="Davis R.W."/>
            <person name="Dietrich F.S."/>
            <person name="Delius H."/>
            <person name="DiPaolo T."/>
            <person name="Dubois E."/>
            <person name="Duesterhoeft A."/>
            <person name="Duncan M."/>
            <person name="Floeth M."/>
            <person name="Fortin N."/>
            <person name="Friesen J.D."/>
            <person name="Fritz C."/>
            <person name="Goffeau A."/>
            <person name="Hall J."/>
            <person name="Hebling U."/>
            <person name="Heumann K."/>
            <person name="Hilbert H."/>
            <person name="Hillier L.W."/>
            <person name="Hunicke-Smith S."/>
            <person name="Hyman R.W."/>
            <person name="Johnston M."/>
            <person name="Kalman S."/>
            <person name="Kleine K."/>
            <person name="Komp C."/>
            <person name="Kurdi O."/>
            <person name="Lashkari D."/>
            <person name="Lew H."/>
            <person name="Lin A."/>
            <person name="Lin D."/>
            <person name="Louis E.J."/>
            <person name="Marathe R."/>
            <person name="Messenguy F."/>
            <person name="Mewes H.-W."/>
            <person name="Mirtipati S."/>
            <person name="Moestl D."/>
            <person name="Mueller-Auer S."/>
            <person name="Namath A."/>
            <person name="Nentwich U."/>
            <person name="Oefner P."/>
            <person name="Pearson D."/>
            <person name="Petel F.X."/>
            <person name="Pohl T.M."/>
            <person name="Purnelle B."/>
            <person name="Rajandream M.A."/>
            <person name="Rechmann S."/>
            <person name="Rieger M."/>
            <person name="Riles L."/>
            <person name="Roberts D."/>
            <person name="Schaefer M."/>
            <person name="Scharfe M."/>
            <person name="Scherens B."/>
            <person name="Schramm S."/>
            <person name="Schroeder M."/>
            <person name="Sdicu A.-M."/>
            <person name="Tettelin H."/>
            <person name="Urrestarazu L.A."/>
            <person name="Ushinsky S."/>
            <person name="Vierendeels F."/>
            <person name="Vissers S."/>
            <person name="Voss H."/>
            <person name="Walsh S.V."/>
            <person name="Wambutt R."/>
            <person name="Wang Y."/>
            <person name="Wedler E."/>
            <person name="Wedler H."/>
            <person name="Winnett E."/>
            <person name="Zhong W.-W."/>
            <person name="Zollner A."/>
            <person name="Vo D.H."/>
            <person name="Hani J."/>
        </authorList>
    </citation>
    <scope>NUCLEOTIDE SEQUENCE [LARGE SCALE GENOMIC DNA]</scope>
    <source>
        <strain>ATCC 204508 / S288c</strain>
    </source>
</reference>
<reference key="2">
    <citation type="journal article" date="2014" name="G3 (Bethesda)">
        <title>The reference genome sequence of Saccharomyces cerevisiae: Then and now.</title>
        <authorList>
            <person name="Engel S.R."/>
            <person name="Dietrich F.S."/>
            <person name="Fisk D.G."/>
            <person name="Binkley G."/>
            <person name="Balakrishnan R."/>
            <person name="Costanzo M.C."/>
            <person name="Dwight S.S."/>
            <person name="Hitz B.C."/>
            <person name="Karra K."/>
            <person name="Nash R.S."/>
            <person name="Weng S."/>
            <person name="Wong E.D."/>
            <person name="Lloyd P."/>
            <person name="Skrzypek M.S."/>
            <person name="Miyasato S.R."/>
            <person name="Simison M."/>
            <person name="Cherry J.M."/>
        </authorList>
    </citation>
    <scope>GENOME REANNOTATION</scope>
    <source>
        <strain>ATCC 204508 / S288c</strain>
    </source>
</reference>
<reference key="3">
    <citation type="journal article" date="2003" name="Nature">
        <title>Global analysis of protein expression in yeast.</title>
        <authorList>
            <person name="Ghaemmaghami S."/>
            <person name="Huh W.-K."/>
            <person name="Bower K."/>
            <person name="Howson R.W."/>
            <person name="Belle A."/>
            <person name="Dephoure N."/>
            <person name="O'Shea E.K."/>
            <person name="Weissman J.S."/>
        </authorList>
    </citation>
    <scope>LEVEL OF PROTEIN EXPRESSION [LARGE SCALE ANALYSIS]</scope>
</reference>
<proteinExistence type="evidence at protein level"/>
<dbReference type="EMBL" id="Z73572">
    <property type="protein sequence ID" value="CAA97931.1"/>
    <property type="molecule type" value="Genomic_DNA"/>
</dbReference>
<dbReference type="EMBL" id="BK006949">
    <property type="protein sequence ID" value="DAA11220.1"/>
    <property type="molecule type" value="Genomic_DNA"/>
</dbReference>
<dbReference type="PIR" id="S65235">
    <property type="entry name" value="S65235"/>
</dbReference>
<dbReference type="RefSeq" id="NP_015108.1">
    <property type="nucleotide sequence ID" value="NM_001184030.1"/>
</dbReference>
<dbReference type="SMR" id="Q08964"/>
<dbReference type="BioGRID" id="35969">
    <property type="interactions" value="83"/>
</dbReference>
<dbReference type="DIP" id="DIP-3968N"/>
<dbReference type="FunCoup" id="Q08964">
    <property type="interactions" value="52"/>
</dbReference>
<dbReference type="MINT" id="Q08964"/>
<dbReference type="STRING" id="4932.YPL216W"/>
<dbReference type="iPTMnet" id="Q08964"/>
<dbReference type="PaxDb" id="4932-YPL216W"/>
<dbReference type="PeptideAtlas" id="Q08964"/>
<dbReference type="EnsemblFungi" id="YPL216W_mRNA">
    <property type="protein sequence ID" value="YPL216W"/>
    <property type="gene ID" value="YPL216W"/>
</dbReference>
<dbReference type="GeneID" id="855885"/>
<dbReference type="KEGG" id="sce:YPL216W"/>
<dbReference type="AGR" id="SGD:S000006137"/>
<dbReference type="SGD" id="S000006137">
    <property type="gene designation" value="YPL216W"/>
</dbReference>
<dbReference type="VEuPathDB" id="FungiDB:YPL216W"/>
<dbReference type="eggNOG" id="KOG1245">
    <property type="taxonomic scope" value="Eukaryota"/>
</dbReference>
<dbReference type="GeneTree" id="ENSGT00940000176599"/>
<dbReference type="HOGENOM" id="CLU_265647_0_0_1"/>
<dbReference type="InParanoid" id="Q08964"/>
<dbReference type="OrthoDB" id="332390at2759"/>
<dbReference type="BioCyc" id="YEAST:G3O-34105-MONOMER"/>
<dbReference type="BioGRID-ORCS" id="855885">
    <property type="hits" value="1 hit in 10 CRISPR screens"/>
</dbReference>
<dbReference type="PRO" id="PR:Q08964"/>
<dbReference type="Proteomes" id="UP000002311">
    <property type="component" value="Chromosome XVI"/>
</dbReference>
<dbReference type="RNAct" id="Q08964">
    <property type="molecule type" value="protein"/>
</dbReference>
<dbReference type="GO" id="GO:0000785">
    <property type="term" value="C:chromatin"/>
    <property type="evidence" value="ECO:0007669"/>
    <property type="project" value="UniProtKB-ARBA"/>
</dbReference>
<dbReference type="GO" id="GO:0000781">
    <property type="term" value="C:chromosome, telomeric region"/>
    <property type="evidence" value="ECO:0007669"/>
    <property type="project" value="GOC"/>
</dbReference>
<dbReference type="GO" id="GO:0005634">
    <property type="term" value="C:nucleus"/>
    <property type="evidence" value="ECO:0000318"/>
    <property type="project" value="GO_Central"/>
</dbReference>
<dbReference type="GO" id="GO:0031509">
    <property type="term" value="P:subtelomeric heterochromatin formation"/>
    <property type="evidence" value="ECO:0000318"/>
    <property type="project" value="GO_Central"/>
</dbReference>
<dbReference type="InterPro" id="IPR018501">
    <property type="entry name" value="DDT_dom"/>
</dbReference>
<dbReference type="InterPro" id="IPR028941">
    <property type="entry name" value="WHIM2_dom"/>
</dbReference>
<dbReference type="InterPro" id="IPR013136">
    <property type="entry name" value="WSTF_Acf1_Cbp146"/>
</dbReference>
<dbReference type="PANTHER" id="PTHR32075">
    <property type="entry name" value="ISWI CHROMATIN-REMODELING COMPLEX SUBUNIT YPL216W-RELATED"/>
    <property type="match status" value="1"/>
</dbReference>
<dbReference type="PANTHER" id="PTHR32075:SF6">
    <property type="entry name" value="ISWI CHROMATIN-REMODELING COMPLEX SUBUNIT YPL216W-RELATED"/>
    <property type="match status" value="1"/>
</dbReference>
<dbReference type="Pfam" id="PF02791">
    <property type="entry name" value="DDT"/>
    <property type="match status" value="1"/>
</dbReference>
<dbReference type="Pfam" id="PF10537">
    <property type="entry name" value="WAC_Acf1_DNA_bd"/>
    <property type="match status" value="1"/>
</dbReference>
<dbReference type="Pfam" id="PF15613">
    <property type="entry name" value="WSD"/>
    <property type="match status" value="1"/>
</dbReference>
<dbReference type="SMART" id="SM00571">
    <property type="entry name" value="DDT"/>
    <property type="match status" value="1"/>
</dbReference>
<dbReference type="PROSITE" id="PS50827">
    <property type="entry name" value="DDT"/>
    <property type="match status" value="1"/>
</dbReference>
<dbReference type="PROSITE" id="PS51136">
    <property type="entry name" value="WAC"/>
    <property type="match status" value="1"/>
</dbReference>
<accession>Q08964</accession>
<accession>D6W3F4</accession>
<sequence length="1102" mass="128133">MVLLNRRKIQPKEIGQSADSFSETPWVIKESSERINDYDSDLKKLDFYKRDIFTCEISGKDGLSYFKALKSEEQHREKVRYLLPKELRKAIANFANFSPIRKVGHLVESAFQRFSNRFFIGDTVCLKTIQKNALITYKEGEPNLVESPTIENNVTLFLVKDVFQSNGMMESEKGEISAPKLSLYLITECLNRESKGAALIVGQNEIKRPESHFSKFIIACFLNEILIKVSNKEHAPWRVKQEYIERYDVNPKCSPNMIDYLPDRMNSSSSELYTPLTIPPESDVEPADWKETSETSETSETSLSKIKAIDDEISVSFDHIYDNVNSLAYNDLKGTVDDKELPFTGPSIPFENISYLDSSLEYKNIDQKWFKECSQFPTERLLVVYQFLSFFGRFIGLSHFNFDQFLTTIKCTSPEALVDEYVKINFLKTYNSKGSFTNEKPRNEIYNQVTSSNVSQREKANVFNADESQRIPSNFTRNQKMRKFITDKSTEFVMYSIFKGKPLKNDDMEFQSYEKVNILYIDIVCSLMCLMTDNEPDWNCNLMDNWTEEKRKEEGNKTEIDIAIEKCLNYGDTSWVKLLHNKNFSNGNWLICLLGILQQNTHMIAYSDVAKCITKKILPLSMNFVNLGDELWDNFRKRLSIKDKIDVLWVLVDFASNFSSYIKELVDKVPKLCNGIRLKLDSAKKEYIKLKRQLKTLTKNRVKLHSNVSMNRYGSDECKGKVNALKVKIAYLMEDIAFLEAKLIQSDIKRLEILGKDRNGNRYYWMDSNGSSSAISEKNEELYNCCFLWVQGPSEADINFCLDVDVESLKKWELLAKAKGTAYATKEVFSIFRSTDGSYYQIAQGENFMIINSNGILMRPTIPAFIDKKIISETPEKLLLSHHQWAFFNDIEDIHMLVDRLDDLRENEGQLKKALTSKMDRIEVSYKQQFKIKRRIECDETFKKNHKLLKNNEFTFPELKRIETTCTSNGQHFSNMEKISKKLSRTKNDLVLEAILKDVAHLGECERALLKKQQNLIYPLNFHFEQLRTIDLEFIVETKRKRQEDILTKLLNHQRYKHISHVSGYGISSQRVDKAAHLDVQGILEEIECQLISRRREDEERN</sequence>